<gene>
    <name evidence="1" type="primary">coaE</name>
    <name type="ordered locus">Ava_0282</name>
</gene>
<name>COAE_TRIV2</name>
<comment type="function">
    <text evidence="1">Catalyzes the phosphorylation of the 3'-hydroxyl group of dephosphocoenzyme A to form coenzyme A.</text>
</comment>
<comment type="catalytic activity">
    <reaction evidence="1">
        <text>3'-dephospho-CoA + ATP = ADP + CoA + H(+)</text>
        <dbReference type="Rhea" id="RHEA:18245"/>
        <dbReference type="ChEBI" id="CHEBI:15378"/>
        <dbReference type="ChEBI" id="CHEBI:30616"/>
        <dbReference type="ChEBI" id="CHEBI:57287"/>
        <dbReference type="ChEBI" id="CHEBI:57328"/>
        <dbReference type="ChEBI" id="CHEBI:456216"/>
        <dbReference type="EC" id="2.7.1.24"/>
    </reaction>
</comment>
<comment type="pathway">
    <text evidence="1">Cofactor biosynthesis; coenzyme A biosynthesis; CoA from (R)-pantothenate: step 5/5.</text>
</comment>
<comment type="subcellular location">
    <subcellularLocation>
        <location evidence="1">Cytoplasm</location>
    </subcellularLocation>
</comment>
<comment type="similarity">
    <text evidence="1">Belongs to the CoaE family.</text>
</comment>
<sequence>MTQRIIGLTGGIATGKTTVANYLASAHHLPIFDADIYARDAVSLGSPILDAIAGRYGKEILLPDGSLNRPKLGEIIFQNQDERHWLESLIHPYVRDRFLKAIAESTSPILVLVIPLLIEVQMTNLVTEIWVVICSESQQLQRLMERNHLTLEQAQARINSQLSLKEKAAIADVVLDNSSSLESLLKQVDIALNFEL</sequence>
<keyword id="KW-0067">ATP-binding</keyword>
<keyword id="KW-0173">Coenzyme A biosynthesis</keyword>
<keyword id="KW-0963">Cytoplasm</keyword>
<keyword id="KW-0418">Kinase</keyword>
<keyword id="KW-0547">Nucleotide-binding</keyword>
<keyword id="KW-0808">Transferase</keyword>
<dbReference type="EC" id="2.7.1.24" evidence="1"/>
<dbReference type="EMBL" id="CP000117">
    <property type="protein sequence ID" value="ABA19908.1"/>
    <property type="molecule type" value="Genomic_DNA"/>
</dbReference>
<dbReference type="SMR" id="Q3MGH8"/>
<dbReference type="STRING" id="240292.Ava_0282"/>
<dbReference type="KEGG" id="ava:Ava_0282"/>
<dbReference type="eggNOG" id="COG0237">
    <property type="taxonomic scope" value="Bacteria"/>
</dbReference>
<dbReference type="HOGENOM" id="CLU_057180_0_0_3"/>
<dbReference type="UniPathway" id="UPA00241">
    <property type="reaction ID" value="UER00356"/>
</dbReference>
<dbReference type="Proteomes" id="UP000002533">
    <property type="component" value="Chromosome"/>
</dbReference>
<dbReference type="GO" id="GO:0005737">
    <property type="term" value="C:cytoplasm"/>
    <property type="evidence" value="ECO:0007669"/>
    <property type="project" value="UniProtKB-SubCell"/>
</dbReference>
<dbReference type="GO" id="GO:0005524">
    <property type="term" value="F:ATP binding"/>
    <property type="evidence" value="ECO:0007669"/>
    <property type="project" value="UniProtKB-UniRule"/>
</dbReference>
<dbReference type="GO" id="GO:0004140">
    <property type="term" value="F:dephospho-CoA kinase activity"/>
    <property type="evidence" value="ECO:0007669"/>
    <property type="project" value="UniProtKB-UniRule"/>
</dbReference>
<dbReference type="GO" id="GO:0015937">
    <property type="term" value="P:coenzyme A biosynthetic process"/>
    <property type="evidence" value="ECO:0007669"/>
    <property type="project" value="UniProtKB-UniRule"/>
</dbReference>
<dbReference type="CDD" id="cd02022">
    <property type="entry name" value="DPCK"/>
    <property type="match status" value="1"/>
</dbReference>
<dbReference type="Gene3D" id="3.40.50.300">
    <property type="entry name" value="P-loop containing nucleotide triphosphate hydrolases"/>
    <property type="match status" value="1"/>
</dbReference>
<dbReference type="HAMAP" id="MF_00376">
    <property type="entry name" value="Dephospho_CoA_kinase"/>
    <property type="match status" value="1"/>
</dbReference>
<dbReference type="InterPro" id="IPR001977">
    <property type="entry name" value="Depp_CoAkinase"/>
</dbReference>
<dbReference type="InterPro" id="IPR027417">
    <property type="entry name" value="P-loop_NTPase"/>
</dbReference>
<dbReference type="NCBIfam" id="TIGR00152">
    <property type="entry name" value="dephospho-CoA kinase"/>
    <property type="match status" value="1"/>
</dbReference>
<dbReference type="PANTHER" id="PTHR10695:SF46">
    <property type="entry name" value="BIFUNCTIONAL COENZYME A SYNTHASE-RELATED"/>
    <property type="match status" value="1"/>
</dbReference>
<dbReference type="PANTHER" id="PTHR10695">
    <property type="entry name" value="DEPHOSPHO-COA KINASE-RELATED"/>
    <property type="match status" value="1"/>
</dbReference>
<dbReference type="Pfam" id="PF01121">
    <property type="entry name" value="CoaE"/>
    <property type="match status" value="1"/>
</dbReference>
<dbReference type="SUPFAM" id="SSF52540">
    <property type="entry name" value="P-loop containing nucleoside triphosphate hydrolases"/>
    <property type="match status" value="1"/>
</dbReference>
<dbReference type="PROSITE" id="PS51219">
    <property type="entry name" value="DPCK"/>
    <property type="match status" value="1"/>
</dbReference>
<evidence type="ECO:0000255" key="1">
    <source>
        <dbReference type="HAMAP-Rule" id="MF_00376"/>
    </source>
</evidence>
<feature type="chain" id="PRO_0000243252" description="Dephospho-CoA kinase">
    <location>
        <begin position="1"/>
        <end position="196"/>
    </location>
</feature>
<feature type="domain" description="DPCK" evidence="1">
    <location>
        <begin position="5"/>
        <end position="196"/>
    </location>
</feature>
<feature type="binding site" evidence="1">
    <location>
        <begin position="13"/>
        <end position="18"/>
    </location>
    <ligand>
        <name>ATP</name>
        <dbReference type="ChEBI" id="CHEBI:30616"/>
    </ligand>
</feature>
<organism>
    <name type="scientific">Trichormus variabilis (strain ATCC 29413 / PCC 7937)</name>
    <name type="common">Anabaena variabilis</name>
    <dbReference type="NCBI Taxonomy" id="240292"/>
    <lineage>
        <taxon>Bacteria</taxon>
        <taxon>Bacillati</taxon>
        <taxon>Cyanobacteriota</taxon>
        <taxon>Cyanophyceae</taxon>
        <taxon>Nostocales</taxon>
        <taxon>Nostocaceae</taxon>
        <taxon>Trichormus</taxon>
    </lineage>
</organism>
<proteinExistence type="inferred from homology"/>
<protein>
    <recommendedName>
        <fullName evidence="1">Dephospho-CoA kinase</fullName>
        <ecNumber evidence="1">2.7.1.24</ecNumber>
    </recommendedName>
    <alternativeName>
        <fullName evidence="1">Dephosphocoenzyme A kinase</fullName>
    </alternativeName>
</protein>
<reference key="1">
    <citation type="journal article" date="2014" name="Stand. Genomic Sci.">
        <title>Complete genome sequence of Anabaena variabilis ATCC 29413.</title>
        <authorList>
            <person name="Thiel T."/>
            <person name="Pratte B.S."/>
            <person name="Zhong J."/>
            <person name="Goodwin L."/>
            <person name="Copeland A."/>
            <person name="Lucas S."/>
            <person name="Han C."/>
            <person name="Pitluck S."/>
            <person name="Land M.L."/>
            <person name="Kyrpides N.C."/>
            <person name="Woyke T."/>
        </authorList>
    </citation>
    <scope>NUCLEOTIDE SEQUENCE [LARGE SCALE GENOMIC DNA]</scope>
    <source>
        <strain>ATCC 29413 / PCC 7937</strain>
    </source>
</reference>
<accession>Q3MGH8</accession>